<proteinExistence type="inferred from homology"/>
<organism>
    <name type="scientific">Geotalea daltonii (strain DSM 22248 / JCM 15807 / FRC-32)</name>
    <name type="common">Geobacter daltonii</name>
    <dbReference type="NCBI Taxonomy" id="316067"/>
    <lineage>
        <taxon>Bacteria</taxon>
        <taxon>Pseudomonadati</taxon>
        <taxon>Thermodesulfobacteriota</taxon>
        <taxon>Desulfuromonadia</taxon>
        <taxon>Geobacterales</taxon>
        <taxon>Geobacteraceae</taxon>
        <taxon>Geotalea</taxon>
    </lineage>
</organism>
<protein>
    <recommendedName>
        <fullName evidence="1">D-aminoacyl-tRNA deacylase</fullName>
        <shortName evidence="1">DTD</shortName>
        <ecNumber evidence="1">3.1.1.96</ecNumber>
    </recommendedName>
    <alternativeName>
        <fullName evidence="1">Gly-tRNA(Ala) deacylase</fullName>
    </alternativeName>
</protein>
<comment type="function">
    <text evidence="1">An aminoacyl-tRNA editing enzyme that deacylates mischarged D-aminoacyl-tRNAs. Also deacylates mischarged glycyl-tRNA(Ala), protecting cells against glycine mischarging by AlaRS. Acts via tRNA-based rather than protein-based catalysis; rejects L-amino acids rather than detecting D-amino acids in the active site. By recycling D-aminoacyl-tRNA to D-amino acids and free tRNA molecules, this enzyme counteracts the toxicity associated with the formation of D-aminoacyl-tRNA entities in vivo and helps enforce protein L-homochirality.</text>
</comment>
<comment type="catalytic activity">
    <reaction evidence="1">
        <text>glycyl-tRNA(Ala) + H2O = tRNA(Ala) + glycine + H(+)</text>
        <dbReference type="Rhea" id="RHEA:53744"/>
        <dbReference type="Rhea" id="RHEA-COMP:9657"/>
        <dbReference type="Rhea" id="RHEA-COMP:13640"/>
        <dbReference type="ChEBI" id="CHEBI:15377"/>
        <dbReference type="ChEBI" id="CHEBI:15378"/>
        <dbReference type="ChEBI" id="CHEBI:57305"/>
        <dbReference type="ChEBI" id="CHEBI:78442"/>
        <dbReference type="ChEBI" id="CHEBI:78522"/>
        <dbReference type="EC" id="3.1.1.96"/>
    </reaction>
</comment>
<comment type="catalytic activity">
    <reaction evidence="1">
        <text>a D-aminoacyl-tRNA + H2O = a tRNA + a D-alpha-amino acid + H(+)</text>
        <dbReference type="Rhea" id="RHEA:13953"/>
        <dbReference type="Rhea" id="RHEA-COMP:10123"/>
        <dbReference type="Rhea" id="RHEA-COMP:10124"/>
        <dbReference type="ChEBI" id="CHEBI:15377"/>
        <dbReference type="ChEBI" id="CHEBI:15378"/>
        <dbReference type="ChEBI" id="CHEBI:59871"/>
        <dbReference type="ChEBI" id="CHEBI:78442"/>
        <dbReference type="ChEBI" id="CHEBI:79333"/>
        <dbReference type="EC" id="3.1.1.96"/>
    </reaction>
</comment>
<comment type="subunit">
    <text evidence="1">Homodimer.</text>
</comment>
<comment type="subcellular location">
    <subcellularLocation>
        <location evidence="1">Cytoplasm</location>
    </subcellularLocation>
</comment>
<comment type="domain">
    <text evidence="1">A Gly-cisPro motif from one monomer fits into the active site of the other monomer to allow specific chiral rejection of L-amino acids.</text>
</comment>
<comment type="similarity">
    <text evidence="1">Belongs to the DTD family.</text>
</comment>
<feature type="chain" id="PRO_1000146198" description="D-aminoacyl-tRNA deacylase">
    <location>
        <begin position="1"/>
        <end position="150"/>
    </location>
</feature>
<feature type="short sequence motif" description="Gly-cisPro motif, important for rejection of L-amino acids" evidence="1">
    <location>
        <begin position="137"/>
        <end position="138"/>
    </location>
</feature>
<sequence>MKAVIQRVSEATVRVDGKKVGSIERGVLVLLGVEKGDETRNADWLAEKIVNLRIFEDDGGKMNLSLMDIKGELLSVSQFTLAGNCSKGRRPSFDTAAPPEDANHLYQYFNGKIWEMGIPVQSGIFQADMKVSLINDGPVTFILETPKREP</sequence>
<reference key="1">
    <citation type="submission" date="2009-01" db="EMBL/GenBank/DDBJ databases">
        <title>Complete sequence of Geobacter sp. FRC-32.</title>
        <authorList>
            <consortium name="US DOE Joint Genome Institute"/>
            <person name="Lucas S."/>
            <person name="Copeland A."/>
            <person name="Lapidus A."/>
            <person name="Glavina del Rio T."/>
            <person name="Dalin E."/>
            <person name="Tice H."/>
            <person name="Bruce D."/>
            <person name="Goodwin L."/>
            <person name="Pitluck S."/>
            <person name="Saunders E."/>
            <person name="Brettin T."/>
            <person name="Detter J.C."/>
            <person name="Han C."/>
            <person name="Larimer F."/>
            <person name="Land M."/>
            <person name="Hauser L."/>
            <person name="Kyrpides N."/>
            <person name="Ovchinnikova G."/>
            <person name="Kostka J."/>
            <person name="Richardson P."/>
        </authorList>
    </citation>
    <scope>NUCLEOTIDE SEQUENCE [LARGE SCALE GENOMIC DNA]</scope>
    <source>
        <strain>DSM 22248 / JCM 15807 / FRC-32</strain>
    </source>
</reference>
<keyword id="KW-0963">Cytoplasm</keyword>
<keyword id="KW-0378">Hydrolase</keyword>
<keyword id="KW-1185">Reference proteome</keyword>
<keyword id="KW-0694">RNA-binding</keyword>
<keyword id="KW-0820">tRNA-binding</keyword>
<gene>
    <name evidence="1" type="primary">dtd</name>
    <name type="ordered locus">Geob_1395</name>
</gene>
<dbReference type="EC" id="3.1.1.96" evidence="1"/>
<dbReference type="EMBL" id="CP001390">
    <property type="protein sequence ID" value="ACM19755.1"/>
    <property type="molecule type" value="Genomic_DNA"/>
</dbReference>
<dbReference type="RefSeq" id="WP_012646484.1">
    <property type="nucleotide sequence ID" value="NC_011979.1"/>
</dbReference>
<dbReference type="SMR" id="B9M4M9"/>
<dbReference type="STRING" id="316067.Geob_1395"/>
<dbReference type="KEGG" id="geo:Geob_1395"/>
<dbReference type="eggNOG" id="COG1490">
    <property type="taxonomic scope" value="Bacteria"/>
</dbReference>
<dbReference type="HOGENOM" id="CLU_076901_1_0_7"/>
<dbReference type="OrthoDB" id="9801395at2"/>
<dbReference type="Proteomes" id="UP000007721">
    <property type="component" value="Chromosome"/>
</dbReference>
<dbReference type="GO" id="GO:0005737">
    <property type="term" value="C:cytoplasm"/>
    <property type="evidence" value="ECO:0007669"/>
    <property type="project" value="UniProtKB-SubCell"/>
</dbReference>
<dbReference type="GO" id="GO:0051500">
    <property type="term" value="F:D-tyrosyl-tRNA(Tyr) deacylase activity"/>
    <property type="evidence" value="ECO:0007669"/>
    <property type="project" value="TreeGrafter"/>
</dbReference>
<dbReference type="GO" id="GO:0106026">
    <property type="term" value="F:Gly-tRNA(Ala) deacylase activity"/>
    <property type="evidence" value="ECO:0007669"/>
    <property type="project" value="UniProtKB-UniRule"/>
</dbReference>
<dbReference type="GO" id="GO:0043908">
    <property type="term" value="F:Ser(Gly)-tRNA(Ala) hydrolase activity"/>
    <property type="evidence" value="ECO:0007669"/>
    <property type="project" value="UniProtKB-UniRule"/>
</dbReference>
<dbReference type="GO" id="GO:0000049">
    <property type="term" value="F:tRNA binding"/>
    <property type="evidence" value="ECO:0007669"/>
    <property type="project" value="UniProtKB-UniRule"/>
</dbReference>
<dbReference type="GO" id="GO:0019478">
    <property type="term" value="P:D-amino acid catabolic process"/>
    <property type="evidence" value="ECO:0007669"/>
    <property type="project" value="UniProtKB-UniRule"/>
</dbReference>
<dbReference type="CDD" id="cd00563">
    <property type="entry name" value="Dtyr_deacylase"/>
    <property type="match status" value="1"/>
</dbReference>
<dbReference type="FunFam" id="3.50.80.10:FF:000001">
    <property type="entry name" value="D-aminoacyl-tRNA deacylase"/>
    <property type="match status" value="1"/>
</dbReference>
<dbReference type="Gene3D" id="3.50.80.10">
    <property type="entry name" value="D-tyrosyl-tRNA(Tyr) deacylase"/>
    <property type="match status" value="1"/>
</dbReference>
<dbReference type="HAMAP" id="MF_00518">
    <property type="entry name" value="Deacylase_Dtd"/>
    <property type="match status" value="1"/>
</dbReference>
<dbReference type="InterPro" id="IPR003732">
    <property type="entry name" value="Daa-tRNA_deacyls_DTD"/>
</dbReference>
<dbReference type="InterPro" id="IPR023509">
    <property type="entry name" value="DTD-like_sf"/>
</dbReference>
<dbReference type="NCBIfam" id="TIGR00256">
    <property type="entry name" value="D-aminoacyl-tRNA deacylase"/>
    <property type="match status" value="1"/>
</dbReference>
<dbReference type="PANTHER" id="PTHR10472:SF5">
    <property type="entry name" value="D-AMINOACYL-TRNA DEACYLASE 1"/>
    <property type="match status" value="1"/>
</dbReference>
<dbReference type="PANTHER" id="PTHR10472">
    <property type="entry name" value="D-TYROSYL-TRNA TYR DEACYLASE"/>
    <property type="match status" value="1"/>
</dbReference>
<dbReference type="Pfam" id="PF02580">
    <property type="entry name" value="Tyr_Deacylase"/>
    <property type="match status" value="1"/>
</dbReference>
<dbReference type="SUPFAM" id="SSF69500">
    <property type="entry name" value="DTD-like"/>
    <property type="match status" value="1"/>
</dbReference>
<name>DTD_GEODF</name>
<accession>B9M4M9</accession>
<evidence type="ECO:0000255" key="1">
    <source>
        <dbReference type="HAMAP-Rule" id="MF_00518"/>
    </source>
</evidence>